<evidence type="ECO:0000255" key="1">
    <source>
        <dbReference type="HAMAP-Rule" id="MF_00098"/>
    </source>
</evidence>
<keyword id="KW-0030">Aminoacyl-tRNA synthetase</keyword>
<keyword id="KW-0067">ATP-binding</keyword>
<keyword id="KW-0963">Cytoplasm</keyword>
<keyword id="KW-0436">Ligase</keyword>
<keyword id="KW-0479">Metal-binding</keyword>
<keyword id="KW-0547">Nucleotide-binding</keyword>
<keyword id="KW-0648">Protein biosynthesis</keyword>
<keyword id="KW-0694">RNA-binding</keyword>
<keyword id="KW-0820">tRNA-binding</keyword>
<keyword id="KW-0862">Zinc</keyword>
<gene>
    <name evidence="1" type="primary">metG</name>
    <name type="ordered locus">PLES_15301</name>
</gene>
<sequence length="677" mass="74962">MSEPRKILVTSALPYANGSIHLGHMLEYIQTDMWVRFQKMRGNQAVYVCADDAHGSAIMLRAEREGITSEQLIDAVRAEHMGDFADFLVDFDNYHSTHSEENRELSSAIYLKLRDAGHIDTRPVTQYFDPEKQMFLADRFIKGTCPKCGTADQYGDNCEACGATYAPTELKDPKSAISGATPVLKESLHYFFKLPDFEAMLKQWTRSGALQESVANKLAEWLDSGLQQWDISRDAPYFGFEIPDAPGKYFYVWLDAPIGYMASFKNLCARRPELDFDAFWGKDSSAELYHFIGKDIVNFHALFWPAMLEGAGYRKPTALNVHGYLTVNGQKMSKSRGTFVKARTYLDHLDPEYLRYYYASKLGRGVEDLDLNLEDFVQKVNSDLVGKVVNIASRCAGFIHKGNAGVLVGADPAPELLAAFREAAPGIAEAYEARDFNRAMREIMALADRANAWIAEQAPWALAKQEGQQDKVQAVCGLGINLFRQLVIFLKPVLPKLAAAAEAFLNVAPLTWADHRTLLANHQLNPFQPLMTRIEPAKVEAMIEASKEDLAAASQPAGNGELVKEPIAAEIDFDAFAAVDLRIALIEKCEFVEGADKLLRLSLDIGDAKRNVFSGIKSAYPDPSALEGRLTLYVANLAPRKMKFGVSEGMVLAAGPGGEEIYLLSPDSGAKPGQRVK</sequence>
<accession>B7UWJ8</accession>
<protein>
    <recommendedName>
        <fullName evidence="1">Methionine--tRNA ligase</fullName>
        <ecNumber evidence="1">6.1.1.10</ecNumber>
    </recommendedName>
    <alternativeName>
        <fullName evidence="1">Methionyl-tRNA synthetase</fullName>
        <shortName evidence="1">MetRS</shortName>
    </alternativeName>
</protein>
<comment type="function">
    <text evidence="1">Is required not only for elongation of protein synthesis but also for the initiation of all mRNA translation through initiator tRNA(fMet) aminoacylation.</text>
</comment>
<comment type="catalytic activity">
    <reaction evidence="1">
        <text>tRNA(Met) + L-methionine + ATP = L-methionyl-tRNA(Met) + AMP + diphosphate</text>
        <dbReference type="Rhea" id="RHEA:13481"/>
        <dbReference type="Rhea" id="RHEA-COMP:9667"/>
        <dbReference type="Rhea" id="RHEA-COMP:9698"/>
        <dbReference type="ChEBI" id="CHEBI:30616"/>
        <dbReference type="ChEBI" id="CHEBI:33019"/>
        <dbReference type="ChEBI" id="CHEBI:57844"/>
        <dbReference type="ChEBI" id="CHEBI:78442"/>
        <dbReference type="ChEBI" id="CHEBI:78530"/>
        <dbReference type="ChEBI" id="CHEBI:456215"/>
        <dbReference type="EC" id="6.1.1.10"/>
    </reaction>
</comment>
<comment type="cofactor">
    <cofactor evidence="1">
        <name>Zn(2+)</name>
        <dbReference type="ChEBI" id="CHEBI:29105"/>
    </cofactor>
    <text evidence="1">Binds 1 zinc ion per subunit.</text>
</comment>
<comment type="subunit">
    <text evidence="1">Homodimer.</text>
</comment>
<comment type="subcellular location">
    <subcellularLocation>
        <location evidence="1">Cytoplasm</location>
    </subcellularLocation>
</comment>
<comment type="similarity">
    <text evidence="1">Belongs to the class-I aminoacyl-tRNA synthetase family. MetG type 1 subfamily.</text>
</comment>
<dbReference type="EC" id="6.1.1.10" evidence="1"/>
<dbReference type="EMBL" id="FM209186">
    <property type="protein sequence ID" value="CAW26258.1"/>
    <property type="molecule type" value="Genomic_DNA"/>
</dbReference>
<dbReference type="RefSeq" id="WP_012613760.1">
    <property type="nucleotide sequence ID" value="NC_011770.1"/>
</dbReference>
<dbReference type="SMR" id="B7UWJ8"/>
<dbReference type="KEGG" id="pag:PLES_15301"/>
<dbReference type="HOGENOM" id="CLU_009710_7_0_6"/>
<dbReference type="GO" id="GO:0005829">
    <property type="term" value="C:cytosol"/>
    <property type="evidence" value="ECO:0007669"/>
    <property type="project" value="TreeGrafter"/>
</dbReference>
<dbReference type="GO" id="GO:0005524">
    <property type="term" value="F:ATP binding"/>
    <property type="evidence" value="ECO:0007669"/>
    <property type="project" value="UniProtKB-UniRule"/>
</dbReference>
<dbReference type="GO" id="GO:0046872">
    <property type="term" value="F:metal ion binding"/>
    <property type="evidence" value="ECO:0007669"/>
    <property type="project" value="UniProtKB-KW"/>
</dbReference>
<dbReference type="GO" id="GO:0004825">
    <property type="term" value="F:methionine-tRNA ligase activity"/>
    <property type="evidence" value="ECO:0007669"/>
    <property type="project" value="UniProtKB-UniRule"/>
</dbReference>
<dbReference type="GO" id="GO:0000049">
    <property type="term" value="F:tRNA binding"/>
    <property type="evidence" value="ECO:0007669"/>
    <property type="project" value="UniProtKB-KW"/>
</dbReference>
<dbReference type="GO" id="GO:0006431">
    <property type="term" value="P:methionyl-tRNA aminoacylation"/>
    <property type="evidence" value="ECO:0007669"/>
    <property type="project" value="UniProtKB-UniRule"/>
</dbReference>
<dbReference type="CDD" id="cd07957">
    <property type="entry name" value="Anticodon_Ia_Met"/>
    <property type="match status" value="1"/>
</dbReference>
<dbReference type="CDD" id="cd00814">
    <property type="entry name" value="MetRS_core"/>
    <property type="match status" value="1"/>
</dbReference>
<dbReference type="CDD" id="cd02800">
    <property type="entry name" value="tRNA_bind_EcMetRS_like"/>
    <property type="match status" value="1"/>
</dbReference>
<dbReference type="FunFam" id="1.10.730.10:FF:000005">
    <property type="entry name" value="Methionine--tRNA ligase"/>
    <property type="match status" value="1"/>
</dbReference>
<dbReference type="FunFam" id="2.20.28.20:FF:000001">
    <property type="entry name" value="Methionine--tRNA ligase"/>
    <property type="match status" value="1"/>
</dbReference>
<dbReference type="FunFam" id="2.40.50.140:FF:000042">
    <property type="entry name" value="Methionine--tRNA ligase"/>
    <property type="match status" value="1"/>
</dbReference>
<dbReference type="Gene3D" id="3.40.50.620">
    <property type="entry name" value="HUPs"/>
    <property type="match status" value="1"/>
</dbReference>
<dbReference type="Gene3D" id="1.10.730.10">
    <property type="entry name" value="Isoleucyl-tRNA Synthetase, Domain 1"/>
    <property type="match status" value="1"/>
</dbReference>
<dbReference type="Gene3D" id="2.20.28.20">
    <property type="entry name" value="Methionyl-tRNA synthetase, Zn-domain"/>
    <property type="match status" value="1"/>
</dbReference>
<dbReference type="Gene3D" id="2.40.50.140">
    <property type="entry name" value="Nucleic acid-binding proteins"/>
    <property type="match status" value="1"/>
</dbReference>
<dbReference type="HAMAP" id="MF_00098">
    <property type="entry name" value="Met_tRNA_synth_type1"/>
    <property type="match status" value="1"/>
</dbReference>
<dbReference type="InterPro" id="IPR001412">
    <property type="entry name" value="aa-tRNA-synth_I_CS"/>
</dbReference>
<dbReference type="InterPro" id="IPR041872">
    <property type="entry name" value="Anticodon_Met"/>
</dbReference>
<dbReference type="InterPro" id="IPR004495">
    <property type="entry name" value="Met-tRNA-synth_bsu_C"/>
</dbReference>
<dbReference type="InterPro" id="IPR023458">
    <property type="entry name" value="Met-tRNA_ligase_1"/>
</dbReference>
<dbReference type="InterPro" id="IPR014758">
    <property type="entry name" value="Met-tRNA_synth"/>
</dbReference>
<dbReference type="InterPro" id="IPR015413">
    <property type="entry name" value="Methionyl/Leucyl_tRNA_Synth"/>
</dbReference>
<dbReference type="InterPro" id="IPR033911">
    <property type="entry name" value="MetRS_core"/>
</dbReference>
<dbReference type="InterPro" id="IPR029038">
    <property type="entry name" value="MetRS_Zn"/>
</dbReference>
<dbReference type="InterPro" id="IPR012340">
    <property type="entry name" value="NA-bd_OB-fold"/>
</dbReference>
<dbReference type="InterPro" id="IPR014729">
    <property type="entry name" value="Rossmann-like_a/b/a_fold"/>
</dbReference>
<dbReference type="InterPro" id="IPR002547">
    <property type="entry name" value="tRNA-bd_dom"/>
</dbReference>
<dbReference type="InterPro" id="IPR009080">
    <property type="entry name" value="tRNAsynth_Ia_anticodon-bd"/>
</dbReference>
<dbReference type="NCBIfam" id="TIGR00398">
    <property type="entry name" value="metG"/>
    <property type="match status" value="1"/>
</dbReference>
<dbReference type="NCBIfam" id="TIGR00399">
    <property type="entry name" value="metG_C_term"/>
    <property type="match status" value="1"/>
</dbReference>
<dbReference type="NCBIfam" id="NF001100">
    <property type="entry name" value="PRK00133.1"/>
    <property type="match status" value="1"/>
</dbReference>
<dbReference type="PANTHER" id="PTHR45765">
    <property type="entry name" value="METHIONINE--TRNA LIGASE"/>
    <property type="match status" value="1"/>
</dbReference>
<dbReference type="PANTHER" id="PTHR45765:SF1">
    <property type="entry name" value="METHIONINE--TRNA LIGASE, CYTOPLASMIC"/>
    <property type="match status" value="1"/>
</dbReference>
<dbReference type="Pfam" id="PF19303">
    <property type="entry name" value="Anticodon_3"/>
    <property type="match status" value="1"/>
</dbReference>
<dbReference type="Pfam" id="PF09334">
    <property type="entry name" value="tRNA-synt_1g"/>
    <property type="match status" value="1"/>
</dbReference>
<dbReference type="Pfam" id="PF01588">
    <property type="entry name" value="tRNA_bind"/>
    <property type="match status" value="1"/>
</dbReference>
<dbReference type="PRINTS" id="PR01041">
    <property type="entry name" value="TRNASYNTHMET"/>
</dbReference>
<dbReference type="SUPFAM" id="SSF47323">
    <property type="entry name" value="Anticodon-binding domain of a subclass of class I aminoacyl-tRNA synthetases"/>
    <property type="match status" value="1"/>
</dbReference>
<dbReference type="SUPFAM" id="SSF57770">
    <property type="entry name" value="Methionyl-tRNA synthetase (MetRS), Zn-domain"/>
    <property type="match status" value="1"/>
</dbReference>
<dbReference type="SUPFAM" id="SSF50249">
    <property type="entry name" value="Nucleic acid-binding proteins"/>
    <property type="match status" value="1"/>
</dbReference>
<dbReference type="SUPFAM" id="SSF52374">
    <property type="entry name" value="Nucleotidylyl transferase"/>
    <property type="match status" value="1"/>
</dbReference>
<dbReference type="PROSITE" id="PS00178">
    <property type="entry name" value="AA_TRNA_LIGASE_I"/>
    <property type="match status" value="1"/>
</dbReference>
<dbReference type="PROSITE" id="PS50886">
    <property type="entry name" value="TRBD"/>
    <property type="match status" value="1"/>
</dbReference>
<proteinExistence type="inferred from homology"/>
<feature type="chain" id="PRO_1000199291" description="Methionine--tRNA ligase">
    <location>
        <begin position="1"/>
        <end position="677"/>
    </location>
</feature>
<feature type="domain" description="tRNA-binding" evidence="1">
    <location>
        <begin position="575"/>
        <end position="677"/>
    </location>
</feature>
<feature type="short sequence motif" description="'HIGH' region">
    <location>
        <begin position="14"/>
        <end position="24"/>
    </location>
</feature>
<feature type="short sequence motif" description="'KMSKS' region">
    <location>
        <begin position="331"/>
        <end position="335"/>
    </location>
</feature>
<feature type="binding site" evidence="1">
    <location>
        <position position="145"/>
    </location>
    <ligand>
        <name>Zn(2+)</name>
        <dbReference type="ChEBI" id="CHEBI:29105"/>
    </ligand>
</feature>
<feature type="binding site" evidence="1">
    <location>
        <position position="148"/>
    </location>
    <ligand>
        <name>Zn(2+)</name>
        <dbReference type="ChEBI" id="CHEBI:29105"/>
    </ligand>
</feature>
<feature type="binding site" evidence="1">
    <location>
        <position position="158"/>
    </location>
    <ligand>
        <name>Zn(2+)</name>
        <dbReference type="ChEBI" id="CHEBI:29105"/>
    </ligand>
</feature>
<feature type="binding site" evidence="1">
    <location>
        <position position="161"/>
    </location>
    <ligand>
        <name>Zn(2+)</name>
        <dbReference type="ChEBI" id="CHEBI:29105"/>
    </ligand>
</feature>
<feature type="binding site" evidence="1">
    <location>
        <position position="334"/>
    </location>
    <ligand>
        <name>ATP</name>
        <dbReference type="ChEBI" id="CHEBI:30616"/>
    </ligand>
</feature>
<name>SYM_PSEA8</name>
<organism>
    <name type="scientific">Pseudomonas aeruginosa (strain LESB58)</name>
    <dbReference type="NCBI Taxonomy" id="557722"/>
    <lineage>
        <taxon>Bacteria</taxon>
        <taxon>Pseudomonadati</taxon>
        <taxon>Pseudomonadota</taxon>
        <taxon>Gammaproteobacteria</taxon>
        <taxon>Pseudomonadales</taxon>
        <taxon>Pseudomonadaceae</taxon>
        <taxon>Pseudomonas</taxon>
    </lineage>
</organism>
<reference key="1">
    <citation type="journal article" date="2009" name="Genome Res.">
        <title>Newly introduced genomic prophage islands are critical determinants of in vivo competitiveness in the Liverpool epidemic strain of Pseudomonas aeruginosa.</title>
        <authorList>
            <person name="Winstanley C."/>
            <person name="Langille M.G.I."/>
            <person name="Fothergill J.L."/>
            <person name="Kukavica-Ibrulj I."/>
            <person name="Paradis-Bleau C."/>
            <person name="Sanschagrin F."/>
            <person name="Thomson N.R."/>
            <person name="Winsor G.L."/>
            <person name="Quail M.A."/>
            <person name="Lennard N."/>
            <person name="Bignell A."/>
            <person name="Clarke L."/>
            <person name="Seeger K."/>
            <person name="Saunders D."/>
            <person name="Harris D."/>
            <person name="Parkhill J."/>
            <person name="Hancock R.E.W."/>
            <person name="Brinkman F.S.L."/>
            <person name="Levesque R.C."/>
        </authorList>
    </citation>
    <scope>NUCLEOTIDE SEQUENCE [LARGE SCALE GENOMIC DNA]</scope>
    <source>
        <strain>LESB58</strain>
    </source>
</reference>